<sequence>MNQEVKNKIFSILKITFATALFIFVVITLYRELSGINFKDTLVEFSKINRMSLVLLFIGGGASLVILSMYDVILSRALKMDISLGKVLRVSYIINALNAIVGFGGFIGAGVRAMVYKNYTHDKKKLVHFISLILISMLTGLSLLSLLIVFHVFDASLILDKITWVRWVLYVVSFFLPLFIIYSMVRPPDKNNRFVGLYCTLVSCVEWLAAAVVLYFCGVIVDAHVSFMSFIAIFIIAALSGLVSFIPGGFGAFDLVVLLGFKTLGVPEEKVLLMLLLYRFAYYFVPVIIALILSSFEFGTSAKKYIEGSKYFIPAKDVTSFLMSYQKDIIAKIPSLSLAILVFFTSMIFFVNNLTIVYDALYDGNHLTYYILLAIHTSACLLLLLNVVGIYKQSRRAIIFAMISILLITVATFFTYASYILITWLAIIFVLLIVAFRRARRLKRPVRMRNIVAMLLFSLFILYVNHIFIAGTLYALDIYTIEMHTSVLRYYFWLTILIIAIIIGMIAWLFDYQFSKVRISSKIEDCEEIINQYGGNYLSHLIYSGDKQFFTNENKTAFLMYRYKASSLVVLGDPLGDENAFDELLEAFYNYAEYLGYDVIFYQVTDQHMPLYHNFGNQFFKLGEEAIIDLTQFSTSGKKRRGFRATLNKFDELNISFEIIEPPFSTEFINELQHVSDLWLDNRQEMHFSVGQFNEEYLSKAPIGVMRNEENEVIAFCSLMPTYFNDAISVDLIRWLPELDLPLMDGLYLHMLLWSKEQGYTKFNMGMATLSNVGQLHYSYLRERLAGRVFEHFNGLYRFQGLRRYKSKYNPNWEPRFLVYRKDNSLWESLSKVMRVIRHK</sequence>
<keyword id="KW-0046">Antibiotic resistance</keyword>
<keyword id="KW-1003">Cell membrane</keyword>
<keyword id="KW-0443">Lipid metabolism</keyword>
<keyword id="KW-0472">Membrane</keyword>
<keyword id="KW-0808">Transferase</keyword>
<keyword id="KW-0812">Transmembrane</keyword>
<keyword id="KW-1133">Transmembrane helix</keyword>
<keyword id="KW-0843">Virulence</keyword>
<accession>Q8NWU7</accession>
<feature type="chain" id="PRO_0000096565" description="Phosphatidylglycerol lysyltransferase">
    <location>
        <begin position="1"/>
        <end position="840"/>
    </location>
</feature>
<feature type="topological domain" description="Cytoplasmic" evidence="2">
    <location>
        <begin position="1"/>
        <end position="8"/>
    </location>
</feature>
<feature type="transmembrane region" description="Helical" evidence="2">
    <location>
        <begin position="9"/>
        <end position="29"/>
    </location>
</feature>
<feature type="topological domain" description="Extracellular" evidence="2">
    <location>
        <begin position="30"/>
        <end position="52"/>
    </location>
</feature>
<feature type="transmembrane region" description="Helical" evidence="2">
    <location>
        <begin position="53"/>
        <end position="73"/>
    </location>
</feature>
<feature type="topological domain" description="Cytoplasmic" evidence="2">
    <location>
        <begin position="74"/>
        <end position="89"/>
    </location>
</feature>
<feature type="transmembrane region" description="Helical" evidence="2">
    <location>
        <begin position="90"/>
        <end position="110"/>
    </location>
</feature>
<feature type="topological domain" description="Extracellular" evidence="2">
    <location>
        <begin position="111"/>
        <end position="128"/>
    </location>
</feature>
<feature type="transmembrane region" description="Helical" evidence="2">
    <location>
        <begin position="129"/>
        <end position="149"/>
    </location>
</feature>
<feature type="topological domain" description="Cytoplasmic" evidence="2">
    <location>
        <begin position="150"/>
        <end position="161"/>
    </location>
</feature>
<feature type="transmembrane region" description="Helical" evidence="2">
    <location>
        <begin position="162"/>
        <end position="182"/>
    </location>
</feature>
<feature type="topological domain" description="Extracellular" evidence="2">
    <location>
        <begin position="183"/>
        <end position="200"/>
    </location>
</feature>
<feature type="transmembrane region" description="Helical" evidence="2">
    <location>
        <begin position="201"/>
        <end position="221"/>
    </location>
</feature>
<feature type="topological domain" description="Cytoplasmic" evidence="2">
    <location>
        <begin position="222"/>
        <end position="229"/>
    </location>
</feature>
<feature type="transmembrane region" description="Helical" evidence="2">
    <location>
        <begin position="230"/>
        <end position="250"/>
    </location>
</feature>
<feature type="topological domain" description="Extracellular" evidence="2">
    <location>
        <begin position="251"/>
        <end position="271"/>
    </location>
</feature>
<feature type="transmembrane region" description="Helical" evidence="2">
    <location>
        <begin position="272"/>
        <end position="292"/>
    </location>
</feature>
<feature type="topological domain" description="Cytoplasmic" evidence="2">
    <location>
        <begin position="293"/>
        <end position="337"/>
    </location>
</feature>
<feature type="transmembrane region" description="Helical" evidence="2">
    <location>
        <begin position="338"/>
        <end position="358"/>
    </location>
</feature>
<feature type="topological domain" description="Extracellular" evidence="2">
    <location>
        <begin position="359"/>
        <end position="369"/>
    </location>
</feature>
<feature type="transmembrane region" description="Helical" evidence="2">
    <location>
        <begin position="370"/>
        <end position="390"/>
    </location>
</feature>
<feature type="topological domain" description="Cytoplasmic" evidence="2">
    <location>
        <begin position="391"/>
        <end position="394"/>
    </location>
</feature>
<feature type="transmembrane region" description="Helical" evidence="2">
    <location>
        <begin position="395"/>
        <end position="415"/>
    </location>
</feature>
<feature type="transmembrane region" description="Helical" evidence="2">
    <location>
        <begin position="416"/>
        <end position="436"/>
    </location>
</feature>
<feature type="topological domain" description="Cytoplasmic" evidence="2">
    <location>
        <begin position="437"/>
        <end position="450"/>
    </location>
</feature>
<feature type="transmembrane region" description="Helical" evidence="2">
    <location>
        <begin position="451"/>
        <end position="471"/>
    </location>
</feature>
<feature type="topological domain" description="Extracellular" evidence="2">
    <location>
        <begin position="472"/>
        <end position="489"/>
    </location>
</feature>
<feature type="transmembrane region" description="Helical" evidence="2">
    <location>
        <begin position="490"/>
        <end position="510"/>
    </location>
</feature>
<feature type="topological domain" description="Cytoplasmic" evidence="2">
    <location>
        <begin position="511"/>
        <end position="840"/>
    </location>
</feature>
<protein>
    <recommendedName>
        <fullName>Phosphatidylglycerol lysyltransferase</fullName>
        <ecNumber>2.3.2.3</ecNumber>
    </recommendedName>
    <alternativeName>
        <fullName>Lysylphosphatidylglycerol synthase</fullName>
        <shortName>LPG synthase</shortName>
    </alternativeName>
    <alternativeName>
        <fullName>Multiple peptide resistance factor</fullName>
    </alternativeName>
</protein>
<organism>
    <name type="scientific">Staphylococcus aureus (strain MW2)</name>
    <dbReference type="NCBI Taxonomy" id="196620"/>
    <lineage>
        <taxon>Bacteria</taxon>
        <taxon>Bacillati</taxon>
        <taxon>Bacillota</taxon>
        <taxon>Bacilli</taxon>
        <taxon>Bacillales</taxon>
        <taxon>Staphylococcaceae</taxon>
        <taxon>Staphylococcus</taxon>
    </lineage>
</organism>
<reference key="1">
    <citation type="journal article" date="2002" name="Lancet">
        <title>Genome and virulence determinants of high virulence community-acquired MRSA.</title>
        <authorList>
            <person name="Baba T."/>
            <person name="Takeuchi F."/>
            <person name="Kuroda M."/>
            <person name="Yuzawa H."/>
            <person name="Aoki K."/>
            <person name="Oguchi A."/>
            <person name="Nagai Y."/>
            <person name="Iwama N."/>
            <person name="Asano K."/>
            <person name="Naimi T."/>
            <person name="Kuroda H."/>
            <person name="Cui L."/>
            <person name="Yamamoto K."/>
            <person name="Hiramatsu K."/>
        </authorList>
    </citation>
    <scope>NUCLEOTIDE SEQUENCE [LARGE SCALE GENOMIC DNA]</scope>
    <source>
        <strain>MW2</strain>
    </source>
</reference>
<dbReference type="EC" id="2.3.2.3"/>
<dbReference type="EMBL" id="BA000033">
    <property type="protein sequence ID" value="BAB95112.1"/>
    <property type="molecule type" value="Genomic_DNA"/>
</dbReference>
<dbReference type="RefSeq" id="WP_001071152.1">
    <property type="nucleotide sequence ID" value="NC_003923.1"/>
</dbReference>
<dbReference type="SMR" id="Q8NWU7"/>
<dbReference type="KEGG" id="sam:MW1247"/>
<dbReference type="HOGENOM" id="CLU_008255_7_1_9"/>
<dbReference type="GO" id="GO:0005886">
    <property type="term" value="C:plasma membrane"/>
    <property type="evidence" value="ECO:0007669"/>
    <property type="project" value="UniProtKB-SubCell"/>
</dbReference>
<dbReference type="GO" id="GO:0050071">
    <property type="term" value="F:phosphatidylglycerol lysyltransferase activity"/>
    <property type="evidence" value="ECO:0007669"/>
    <property type="project" value="UniProtKB-EC"/>
</dbReference>
<dbReference type="GO" id="GO:0006629">
    <property type="term" value="P:lipid metabolic process"/>
    <property type="evidence" value="ECO:0007669"/>
    <property type="project" value="UniProtKB-KW"/>
</dbReference>
<dbReference type="GO" id="GO:0055091">
    <property type="term" value="P:phospholipid homeostasis"/>
    <property type="evidence" value="ECO:0007669"/>
    <property type="project" value="TreeGrafter"/>
</dbReference>
<dbReference type="GO" id="GO:0046677">
    <property type="term" value="P:response to antibiotic"/>
    <property type="evidence" value="ECO:0007669"/>
    <property type="project" value="UniProtKB-KW"/>
</dbReference>
<dbReference type="InterPro" id="IPR016181">
    <property type="entry name" value="Acyl_CoA_acyltransferase"/>
</dbReference>
<dbReference type="InterPro" id="IPR022791">
    <property type="entry name" value="L-PG_synthase/AglD"/>
</dbReference>
<dbReference type="InterPro" id="IPR024320">
    <property type="entry name" value="LPG_synthase_C"/>
</dbReference>
<dbReference type="InterPro" id="IPR051211">
    <property type="entry name" value="PG_lysyltransferase"/>
</dbReference>
<dbReference type="NCBIfam" id="NF033480">
    <property type="entry name" value="bifunc_MprF"/>
    <property type="match status" value="1"/>
</dbReference>
<dbReference type="NCBIfam" id="TIGR00374">
    <property type="entry name" value="flippase-like domain"/>
    <property type="match status" value="1"/>
</dbReference>
<dbReference type="PANTHER" id="PTHR34697">
    <property type="entry name" value="PHOSPHATIDYLGLYCEROL LYSYLTRANSFERASE"/>
    <property type="match status" value="1"/>
</dbReference>
<dbReference type="PANTHER" id="PTHR34697:SF2">
    <property type="entry name" value="PHOSPHATIDYLGLYCEROL LYSYLTRANSFERASE"/>
    <property type="match status" value="1"/>
</dbReference>
<dbReference type="Pfam" id="PF09924">
    <property type="entry name" value="LPG_synthase_C"/>
    <property type="match status" value="1"/>
</dbReference>
<dbReference type="Pfam" id="PF03706">
    <property type="entry name" value="LPG_synthase_TM"/>
    <property type="match status" value="1"/>
</dbReference>
<dbReference type="SUPFAM" id="SSF55729">
    <property type="entry name" value="Acyl-CoA N-acyltransferases (Nat)"/>
    <property type="match status" value="1"/>
</dbReference>
<name>MPRF_STAAW</name>
<proteinExistence type="inferred from homology"/>
<gene>
    <name type="primary">mprF</name>
    <name type="ordered locus">MW1247</name>
</gene>
<evidence type="ECO:0000250" key="1"/>
<evidence type="ECO:0000255" key="2"/>
<evidence type="ECO:0000305" key="3"/>
<comment type="function">
    <text evidence="1">Catalyzes the transfer of a lysyl group from L-lysyl-tRNA(Lys) to membrane-bound phosphatidylglycerol (PG), which produces lysylphosphatidylglycerol (LPG), a major component of the bacterial membrane with a positive net charge. LPG synthesis contributes to bacterial virulence as it is involved in the resistance mechanism against cationic antimicrobial peptides (CAMP) produces by the host's immune system (defensins, cathelicidins) and by the competing microorganisms (bacteriocins). In fact, the modification of anionic phosphatidylglycerol with positively charged L-lysine results in repulsion of the peptides (By similarity).</text>
</comment>
<comment type="catalytic activity">
    <reaction>
        <text>L-lysyl-tRNA(Lys) + a 1,2-diacyl-sn-glycero-3-phospho-(1'-sn-glycerol) = a 1,2-diacyl-sn-glycero-3-phospho-1'-(3'-O-L-lysyl)-sn-glycerol + tRNA(Lys)</text>
        <dbReference type="Rhea" id="RHEA:10668"/>
        <dbReference type="Rhea" id="RHEA-COMP:9696"/>
        <dbReference type="Rhea" id="RHEA-COMP:9697"/>
        <dbReference type="ChEBI" id="CHEBI:64716"/>
        <dbReference type="ChEBI" id="CHEBI:75792"/>
        <dbReference type="ChEBI" id="CHEBI:78442"/>
        <dbReference type="ChEBI" id="CHEBI:78529"/>
        <dbReference type="EC" id="2.3.2.3"/>
    </reaction>
</comment>
<comment type="subcellular location">
    <subcellularLocation>
        <location>Cell membrane</location>
        <topology>Multi-pass membrane protein</topology>
    </subcellularLocation>
</comment>
<comment type="similarity">
    <text evidence="3">Belongs to the LPG synthase family.</text>
</comment>